<gene>
    <name type="primary">prmt5</name>
    <name type="synonym">hsl7</name>
</gene>
<comment type="function">
    <text evidence="3 5 6 7">Arginine methyltransferase that can both catalyze the formation of omega-N monomethylarginine (MMA) and symmetrical dimethylarginine (sDMA), with a preference for the formation of MMA. Specifically mediates the symmetrical dimethylation of arginine residues in the small nuclear ribonucleoproteins; such methylation being required for the assembly and biogenesis of snRNP core particles. Methylates the arginine in the motif G-R-G-X-G in its substrates histone H2A, H2AX and H4, producing both monomethylated and symmetrically dimethylated 'Arg-3'. Methylates nucleoplasmin at 'Arg-192', producing both monomethylated and symmetrically dimethylated 'Arg-192'. Involved in the DNA replication checkpoint. Promotes entry into mitosis by promoting the proteasomal degradation of wee2-a. May act as a transcriptional corepressor in CRY1-mediated repression of the core circadian component PER1. Involved in spliceosome maturation and mRNA splicing (By similarity).</text>
</comment>
<comment type="catalytic activity">
    <reaction evidence="6">
        <text>L-arginyl-[protein] + 2 S-adenosyl-L-methionine = N(omega),N(omega)'-dimethyl-L-arginyl-[protein] + 2 S-adenosyl-L-homocysteine + 2 H(+)</text>
        <dbReference type="Rhea" id="RHEA:48108"/>
        <dbReference type="Rhea" id="RHEA-COMP:10532"/>
        <dbReference type="Rhea" id="RHEA-COMP:11992"/>
        <dbReference type="ChEBI" id="CHEBI:15378"/>
        <dbReference type="ChEBI" id="CHEBI:29965"/>
        <dbReference type="ChEBI" id="CHEBI:57856"/>
        <dbReference type="ChEBI" id="CHEBI:59789"/>
        <dbReference type="ChEBI" id="CHEBI:88221"/>
        <dbReference type="EC" id="2.1.1.320"/>
    </reaction>
</comment>
<comment type="subunit">
    <text evidence="5 6 7">Heterotetramer; dimer of heterodimer with wdr77. Interacts with wee2-a; this interaction is disrupted upon activation of the DNA replication checkpoint.</text>
</comment>
<comment type="interaction">
    <interactant intactId="EBI-21229405">
        <id>Q6NUA1</id>
    </interactant>
    <interactant intactId="EBI-21229433">
        <id>Q6NUD0</id>
        <label>wdr77</label>
    </interactant>
    <organismsDiffer>false</organismsDiffer>
    <experiments>5</experiments>
</comment>
<comment type="subcellular location">
    <subcellularLocation>
        <location>Cytoplasm</location>
    </subcellularLocation>
    <subcellularLocation>
        <location>Nucleus</location>
    </subcellularLocation>
    <subcellularLocation>
        <location>Cytoplasm</location>
        <location>Cytosol</location>
    </subcellularLocation>
    <text>Enriched on chromatin.</text>
</comment>
<comment type="tissue specificity">
    <text evidence="5 6">Detected in egg (at protein level).</text>
</comment>
<comment type="similarity">
    <text evidence="4">Belongs to the class I-like SAM-binding methyltransferase superfamily. Protein arginine N-methyltransferase family.</text>
</comment>
<reference key="1">
    <citation type="journal article" date="2004" name="J. Cell Biol.">
        <title>DNA replication checkpoint control of Wee1 stability by vertebrate Hsl7.</title>
        <authorList>
            <person name="Yamada A."/>
            <person name="Duffy B."/>
            <person name="Perry J.A."/>
            <person name="Kornbluth S."/>
        </authorList>
    </citation>
    <scope>NUCLEOTIDE SEQUENCE [MRNA]</scope>
    <scope>FUNCTION</scope>
    <scope>INTERACTION WITH WEE2-A</scope>
    <scope>SUBCELLULAR LOCATION</scope>
    <scope>TISSUE SPECIFICITY</scope>
</reference>
<reference key="2">
    <citation type="submission" date="2004-04" db="EMBL/GenBank/DDBJ databases">
        <authorList>
            <consortium name="NIH - Xenopus Gene Collection (XGC) project"/>
        </authorList>
    </citation>
    <scope>NUCLEOTIDE SEQUENCE [LARGE SCALE MRNA]</scope>
    <source>
        <tissue>Ovary</tissue>
    </source>
</reference>
<reference key="3">
    <citation type="journal article" date="2011" name="J. Biol. Chem.">
        <title>Protein arginine methyltransferase Prmt5-Mep50 methylates histones H2A and H4 and the histone chaperone nucleoplasmin in Xenopus laevis eggs.</title>
        <authorList>
            <person name="Wilczek C."/>
            <person name="Chitta R."/>
            <person name="Woo E."/>
            <person name="Shabanowitz J."/>
            <person name="Chait B.T."/>
            <person name="Hunt D.F."/>
            <person name="Shechter D."/>
        </authorList>
    </citation>
    <scope>FUNCTION</scope>
    <scope>CATALYTIC ACTIVITY</scope>
    <scope>INTERACTION WITH WDR77</scope>
    <scope>SUBCELLULAR LOCATION</scope>
    <scope>IDENTIFICATION BY MASS SPECTROMETRY</scope>
    <scope>TISSUE SPECIFICITY</scope>
</reference>
<reference key="4">
    <citation type="journal article" date="2013" name="PLoS ONE">
        <title>Structure of the arginine methyltransferase PRMT5-MEP50 reveals a mechanism for substrate specificity.</title>
        <authorList>
            <person name="Ho M.C."/>
            <person name="Wilczek C."/>
            <person name="Bonanno J.B."/>
            <person name="Xing L."/>
            <person name="Seznec J."/>
            <person name="Matsui T."/>
            <person name="Carter L.G."/>
            <person name="Onikubo T."/>
            <person name="Kumar P.R."/>
            <person name="Chan M.K."/>
            <person name="Brenowitz M."/>
            <person name="Cheng R.H."/>
            <person name="Reimer U."/>
            <person name="Almo S.C."/>
            <person name="Shechter D."/>
        </authorList>
    </citation>
    <scope>X-RAY CRYSTALLOGRAPHY (2.95 ANGSTROMS) IN COMPLEX WITH WDR77 AND S-ADENOSYL-L-HOMOCYSTEINE</scope>
    <scope>FUNCTION</scope>
    <scope>SUBUNIT</scope>
    <scope>INTERACTION WITH WDR77</scope>
</reference>
<proteinExistence type="evidence at protein level"/>
<dbReference type="EC" id="2.1.1.320" evidence="6"/>
<dbReference type="EMBL" id="AY535008">
    <property type="protein sequence ID" value="AAS98802.1"/>
    <property type="molecule type" value="mRNA"/>
</dbReference>
<dbReference type="EMBL" id="BC068696">
    <property type="protein sequence ID" value="AAH68696.1"/>
    <property type="molecule type" value="mRNA"/>
</dbReference>
<dbReference type="RefSeq" id="NP_001084480.1">
    <property type="nucleotide sequence ID" value="NM_001091011.1"/>
</dbReference>
<dbReference type="PDB" id="4G56">
    <property type="method" value="X-ray"/>
    <property type="resolution" value="2.95 A"/>
    <property type="chains" value="A/C=2-633"/>
</dbReference>
<dbReference type="PDBsum" id="4G56"/>
<dbReference type="SMR" id="Q6NUA1"/>
<dbReference type="BioGRID" id="100851">
    <property type="interactions" value="1"/>
</dbReference>
<dbReference type="IntAct" id="Q6NUA1">
    <property type="interactions" value="1"/>
</dbReference>
<dbReference type="DNASU" id="407754"/>
<dbReference type="GeneID" id="407754"/>
<dbReference type="KEGG" id="xla:407754"/>
<dbReference type="AGR" id="Xenbase:XB-GENE-17343549"/>
<dbReference type="CTD" id="407754"/>
<dbReference type="Xenbase" id="XB-GENE-17343549">
    <property type="gene designation" value="prmt5.S"/>
</dbReference>
<dbReference type="OrthoDB" id="1368803at2759"/>
<dbReference type="BRENDA" id="2.1.1.320">
    <property type="organism ID" value="6725"/>
</dbReference>
<dbReference type="EvolutionaryTrace" id="Q6NUA1"/>
<dbReference type="Proteomes" id="UP000186698">
    <property type="component" value="Chromosome 1S"/>
</dbReference>
<dbReference type="Bgee" id="407754">
    <property type="expression patterns" value="Expressed in ovary and 19 other cell types or tissues"/>
</dbReference>
<dbReference type="GO" id="GO:0005829">
    <property type="term" value="C:cytosol"/>
    <property type="evidence" value="ECO:0000314"/>
    <property type="project" value="UniProtKB"/>
</dbReference>
<dbReference type="GO" id="GO:0005794">
    <property type="term" value="C:Golgi apparatus"/>
    <property type="evidence" value="ECO:0000250"/>
    <property type="project" value="UniProtKB"/>
</dbReference>
<dbReference type="GO" id="GO:0034709">
    <property type="term" value="C:methylosome"/>
    <property type="evidence" value="ECO:0000250"/>
    <property type="project" value="UniProtKB"/>
</dbReference>
<dbReference type="GO" id="GO:0005634">
    <property type="term" value="C:nucleus"/>
    <property type="evidence" value="ECO:0000314"/>
    <property type="project" value="UniProtKB"/>
</dbReference>
<dbReference type="GO" id="GO:0070888">
    <property type="term" value="F:E-box binding"/>
    <property type="evidence" value="ECO:0000250"/>
    <property type="project" value="UniProtKB"/>
</dbReference>
<dbReference type="GO" id="GO:0008469">
    <property type="term" value="F:histone arginine N-methyltransferase activity"/>
    <property type="evidence" value="ECO:0000318"/>
    <property type="project" value="GO_Central"/>
</dbReference>
<dbReference type="GO" id="GO:0070612">
    <property type="term" value="F:histone H2AR3 methyltransferase activity"/>
    <property type="evidence" value="ECO:0000314"/>
    <property type="project" value="UniProtKB"/>
</dbReference>
<dbReference type="GO" id="GO:0044020">
    <property type="term" value="F:histone H4R3 methyltransferase activity"/>
    <property type="evidence" value="ECO:0000314"/>
    <property type="project" value="UniProtKB"/>
</dbReference>
<dbReference type="GO" id="GO:0035243">
    <property type="term" value="F:protein-arginine omega-N symmetric methyltransferase activity"/>
    <property type="evidence" value="ECO:0007669"/>
    <property type="project" value="UniProtKB-EC"/>
</dbReference>
<dbReference type="GO" id="GO:0003714">
    <property type="term" value="F:transcription corepressor activity"/>
    <property type="evidence" value="ECO:0000250"/>
    <property type="project" value="UniProtKB"/>
</dbReference>
<dbReference type="GO" id="GO:0051301">
    <property type="term" value="P:cell division"/>
    <property type="evidence" value="ECO:0007669"/>
    <property type="project" value="UniProtKB-KW"/>
</dbReference>
<dbReference type="GO" id="GO:0032922">
    <property type="term" value="P:circadian regulation of gene expression"/>
    <property type="evidence" value="ECO:0000250"/>
    <property type="project" value="UniProtKB"/>
</dbReference>
<dbReference type="GO" id="GO:0090161">
    <property type="term" value="P:Golgi ribbon formation"/>
    <property type="evidence" value="ECO:0000250"/>
    <property type="project" value="UniProtKB"/>
</dbReference>
<dbReference type="GO" id="GO:0032259">
    <property type="term" value="P:methylation"/>
    <property type="evidence" value="ECO:0007669"/>
    <property type="project" value="UniProtKB-KW"/>
</dbReference>
<dbReference type="GO" id="GO:0033314">
    <property type="term" value="P:mitotic DNA replication checkpoint signaling"/>
    <property type="evidence" value="ECO:0000315"/>
    <property type="project" value="UniProtKB"/>
</dbReference>
<dbReference type="GO" id="GO:1901800">
    <property type="term" value="P:positive regulation of proteasomal protein catabolic process"/>
    <property type="evidence" value="ECO:0000315"/>
    <property type="project" value="UniProtKB"/>
</dbReference>
<dbReference type="GO" id="GO:0006355">
    <property type="term" value="P:regulation of DNA-templated transcription"/>
    <property type="evidence" value="ECO:0000318"/>
    <property type="project" value="GO_Central"/>
</dbReference>
<dbReference type="GO" id="GO:0007088">
    <property type="term" value="P:regulation of mitotic nuclear division"/>
    <property type="evidence" value="ECO:0000315"/>
    <property type="project" value="UniProtKB"/>
</dbReference>
<dbReference type="CDD" id="cd02440">
    <property type="entry name" value="AdoMet_MTases"/>
    <property type="match status" value="1"/>
</dbReference>
<dbReference type="FunFam" id="2.70.160.11:FF:000003">
    <property type="entry name" value="Protein arginine N-methyltransferase 5"/>
    <property type="match status" value="1"/>
</dbReference>
<dbReference type="FunFam" id="3.20.20.150:FF:000008">
    <property type="entry name" value="Protein arginine N-methyltransferase 5"/>
    <property type="match status" value="1"/>
</dbReference>
<dbReference type="FunFam" id="3.40.50.150:FF:000029">
    <property type="entry name" value="Protein arginine N-methyltransferase 5"/>
    <property type="match status" value="1"/>
</dbReference>
<dbReference type="Gene3D" id="3.20.20.150">
    <property type="entry name" value="Divalent-metal-dependent TIM barrel enzymes"/>
    <property type="match status" value="1"/>
</dbReference>
<dbReference type="Gene3D" id="2.70.160.11">
    <property type="entry name" value="Hnrnp arginine n-methyltransferase1"/>
    <property type="match status" value="1"/>
</dbReference>
<dbReference type="Gene3D" id="3.40.50.150">
    <property type="entry name" value="Vaccinia Virus protein VP39"/>
    <property type="match status" value="1"/>
</dbReference>
<dbReference type="InterPro" id="IPR025799">
    <property type="entry name" value="Arg_MeTrfase"/>
</dbReference>
<dbReference type="InterPro" id="IPR007857">
    <property type="entry name" value="Arg_MeTrfase_PRMT5"/>
</dbReference>
<dbReference type="InterPro" id="IPR035075">
    <property type="entry name" value="PRMT5"/>
</dbReference>
<dbReference type="InterPro" id="IPR035248">
    <property type="entry name" value="PRMT5_C"/>
</dbReference>
<dbReference type="InterPro" id="IPR035247">
    <property type="entry name" value="PRMT5_TIM"/>
</dbReference>
<dbReference type="InterPro" id="IPR029063">
    <property type="entry name" value="SAM-dependent_MTases_sf"/>
</dbReference>
<dbReference type="PANTHER" id="PTHR10738">
    <property type="entry name" value="PROTEIN ARGININE N-METHYLTRANSFERASE 5"/>
    <property type="match status" value="1"/>
</dbReference>
<dbReference type="PANTHER" id="PTHR10738:SF0">
    <property type="entry name" value="PROTEIN ARGININE N-METHYLTRANSFERASE 5"/>
    <property type="match status" value="1"/>
</dbReference>
<dbReference type="Pfam" id="PF05185">
    <property type="entry name" value="PRMT5"/>
    <property type="match status" value="1"/>
</dbReference>
<dbReference type="Pfam" id="PF17286">
    <property type="entry name" value="PRMT5_C"/>
    <property type="match status" value="1"/>
</dbReference>
<dbReference type="Pfam" id="PF17285">
    <property type="entry name" value="PRMT5_TIM"/>
    <property type="match status" value="1"/>
</dbReference>
<dbReference type="PIRSF" id="PIRSF015894">
    <property type="entry name" value="Skb1_MeTrfase"/>
    <property type="match status" value="1"/>
</dbReference>
<dbReference type="SUPFAM" id="SSF53335">
    <property type="entry name" value="S-adenosyl-L-methionine-dependent methyltransferases"/>
    <property type="match status" value="1"/>
</dbReference>
<dbReference type="PROSITE" id="PS51678">
    <property type="entry name" value="SAM_MT_PRMT"/>
    <property type="match status" value="1"/>
</dbReference>
<name>ANM5_XENLA</name>
<keyword id="KW-0002">3D-structure</keyword>
<keyword id="KW-0090">Biological rhythms</keyword>
<keyword id="KW-0131">Cell cycle</keyword>
<keyword id="KW-0132">Cell division</keyword>
<keyword id="KW-0156">Chromatin regulator</keyword>
<keyword id="KW-0963">Cytoplasm</keyword>
<keyword id="KW-0489">Methyltransferase</keyword>
<keyword id="KW-0498">Mitosis</keyword>
<keyword id="KW-0539">Nucleus</keyword>
<keyword id="KW-1185">Reference proteome</keyword>
<keyword id="KW-0678">Repressor</keyword>
<keyword id="KW-0949">S-adenosyl-L-methionine</keyword>
<keyword id="KW-0804">Transcription</keyword>
<keyword id="KW-0805">Transcription regulation</keyword>
<keyword id="KW-0808">Transferase</keyword>
<accession>Q6NUA1</accession>
<evidence type="ECO:0000250" key="1"/>
<evidence type="ECO:0000250" key="2">
    <source>
        <dbReference type="UniProtKB" id="O14744"/>
    </source>
</evidence>
<evidence type="ECO:0000250" key="3">
    <source>
        <dbReference type="UniProtKB" id="Q8CIG8"/>
    </source>
</evidence>
<evidence type="ECO:0000255" key="4">
    <source>
        <dbReference type="PROSITE-ProRule" id="PRU01015"/>
    </source>
</evidence>
<evidence type="ECO:0000269" key="5">
    <source>
    </source>
</evidence>
<evidence type="ECO:0000269" key="6">
    <source>
    </source>
</evidence>
<evidence type="ECO:0000269" key="7">
    <source>
    </source>
</evidence>
<evidence type="ECO:0007829" key="8">
    <source>
        <dbReference type="PDB" id="4G56"/>
    </source>
</evidence>
<organism>
    <name type="scientific">Xenopus laevis</name>
    <name type="common">African clawed frog</name>
    <dbReference type="NCBI Taxonomy" id="8355"/>
    <lineage>
        <taxon>Eukaryota</taxon>
        <taxon>Metazoa</taxon>
        <taxon>Chordata</taxon>
        <taxon>Craniata</taxon>
        <taxon>Vertebrata</taxon>
        <taxon>Euteleostomi</taxon>
        <taxon>Amphibia</taxon>
        <taxon>Batrachia</taxon>
        <taxon>Anura</taxon>
        <taxon>Pipoidea</taxon>
        <taxon>Pipidae</taxon>
        <taxon>Xenopodinae</taxon>
        <taxon>Xenopus</taxon>
        <taxon>Xenopus</taxon>
    </lineage>
</organism>
<protein>
    <recommendedName>
        <fullName>Protein arginine N-methyltransferase 5</fullName>
        <shortName>prmt5</shortName>
        <ecNumber evidence="6">2.1.1.320</ecNumber>
    </recommendedName>
    <alternativeName>
        <fullName>Histone synthetic lethal 7 protein</fullName>
        <shortName>Hsl7</shortName>
    </alternativeName>
    <alternativeName>
        <fullName>Histone-arginine N-methyltransferase PRMT5</fullName>
    </alternativeName>
</protein>
<sequence length="633" mass="72285">MAAGDGGRVSSGRDVACVTEVADTLGAMANQGFDFLCMPIFHPRFKREFYKEPAKSRPGPQTRSDLLLSGRDWNTLIVGKLSDWIKTDSEVSRIRKTSEAAMQQELNFSAYLGLPAFLIPLKQEDNSNLSRLLINHIHVGHHSTMFWMRVPLMAPNDLRDDLIENEPISLSEEDNSGEERTWIWWHNFRSLCDYNKKIALAIEIGADLPSGHVIDRWLGEPIKAAFLPTSIFLTNKKGFPVLTKVHQRLIFKLFKLEVQFVISGSHHHSEKDLCSYLQYLEYLSQNSPPPNAYEMFAKGYEDYLQSPLQPLMDNLESQTYEVFEKDPVKYSQYQQAVYKCLLDRVPEEEKETNIQILMVLGAGRGPLVNASLRAAKQAERKIKVYAVEKNPNAVITLEGWRYEEWGSQVTVVSGDMREWKAPEKADIIVSELLGSFGDNELSPECLDGAQHFLKDDGVSIPGEYTSYLAPISSSKLYNEVRACREKDRDPEAQFEMPYVVRLHNFHQLSDPLPCFTFHHPNKDDVIDNNRYCCLQYRVDLNTVLHGFAGYFNTVLYKDVTLSICPESHSPGMFSWFPILFPIKQPIPMREGDTVCVRFWRCNNGKKVWYEWAVTSPVCSAIHNPTGRSYTIGL</sequence>
<feature type="chain" id="PRO_0000422972" description="Protein arginine N-methyltransferase 5">
    <location>
        <begin position="1"/>
        <end position="633"/>
    </location>
</feature>
<feature type="domain" description="SAM-dependent MTase PRMT-type" evidence="4">
    <location>
        <begin position="304"/>
        <end position="611"/>
    </location>
</feature>
<feature type="active site" description="Proton donor/acceptor" evidence="1">
    <location>
        <position position="431"/>
    </location>
</feature>
<feature type="active site" description="Proton donor/acceptor" evidence="1">
    <location>
        <position position="440"/>
    </location>
</feature>
<feature type="binding site">
    <location>
        <position position="320"/>
    </location>
    <ligand>
        <name>S-adenosyl-L-methionine</name>
        <dbReference type="ChEBI" id="CHEBI:59789"/>
    </ligand>
</feature>
<feature type="binding site" evidence="2">
    <location>
        <position position="323"/>
    </location>
    <ligand>
        <name>a protein</name>
        <dbReference type="ChEBI" id="CHEBI:16541"/>
        <note>substrate</note>
    </ligand>
    <ligandPart>
        <name>L-arginine residue</name>
        <dbReference type="ChEBI" id="CHEBI:29965"/>
    </ligandPart>
</feature>
<feature type="binding site">
    <location>
        <begin position="329"/>
        <end position="330"/>
    </location>
    <ligand>
        <name>S-adenosyl-L-methionine</name>
        <dbReference type="ChEBI" id="CHEBI:59789"/>
    </ligand>
</feature>
<feature type="binding site">
    <location>
        <position position="388"/>
    </location>
    <ligand>
        <name>S-adenosyl-L-methionine</name>
        <dbReference type="ChEBI" id="CHEBI:59789"/>
    </ligand>
</feature>
<feature type="binding site">
    <location>
        <begin position="414"/>
        <end position="416"/>
    </location>
    <ligand>
        <name>S-adenosyl-L-methionine</name>
        <dbReference type="ChEBI" id="CHEBI:59789"/>
    </ligand>
</feature>
<feature type="binding site" evidence="2">
    <location>
        <position position="431"/>
    </location>
    <ligand>
        <name>a protein</name>
        <dbReference type="ChEBI" id="CHEBI:16541"/>
        <note>substrate</note>
    </ligand>
    <ligandPart>
        <name>L-arginine residue</name>
        <dbReference type="ChEBI" id="CHEBI:29965"/>
    </ligandPart>
</feature>
<feature type="binding site" evidence="2">
    <location>
        <position position="440"/>
    </location>
    <ligand>
        <name>a protein</name>
        <dbReference type="ChEBI" id="CHEBI:16541"/>
        <note>substrate</note>
    </ligand>
    <ligandPart>
        <name>L-arginine residue</name>
        <dbReference type="ChEBI" id="CHEBI:29965"/>
    </ligandPart>
</feature>
<feature type="binding site">
    <location>
        <position position="440"/>
    </location>
    <ligand>
        <name>S-adenosyl-L-methionine</name>
        <dbReference type="ChEBI" id="CHEBI:59789"/>
    </ligand>
</feature>
<feature type="strand" evidence="8">
    <location>
        <begin position="11"/>
        <end position="14"/>
    </location>
</feature>
<feature type="helix" evidence="8">
    <location>
        <begin position="21"/>
        <end position="29"/>
    </location>
</feature>
<feature type="turn" evidence="8">
    <location>
        <begin position="30"/>
        <end position="32"/>
    </location>
</feature>
<feature type="strand" evidence="8">
    <location>
        <begin position="34"/>
        <end position="41"/>
    </location>
</feature>
<feature type="strand" evidence="8">
    <location>
        <begin position="49"/>
        <end position="51"/>
    </location>
</feature>
<feature type="helix" evidence="8">
    <location>
        <begin position="54"/>
        <end position="56"/>
    </location>
</feature>
<feature type="helix" evidence="8">
    <location>
        <begin position="70"/>
        <end position="75"/>
    </location>
</feature>
<feature type="strand" evidence="8">
    <location>
        <begin position="77"/>
        <end position="80"/>
    </location>
</feature>
<feature type="helix" evidence="8">
    <location>
        <begin position="92"/>
        <end position="111"/>
    </location>
</feature>
<feature type="strand" evidence="8">
    <location>
        <begin position="115"/>
        <end position="120"/>
    </location>
</feature>
<feature type="helix" evidence="8">
    <location>
        <begin position="127"/>
        <end position="138"/>
    </location>
</feature>
<feature type="strand" evidence="8">
    <location>
        <begin position="145"/>
        <end position="153"/>
    </location>
</feature>
<feature type="helix" evidence="8">
    <location>
        <begin position="155"/>
        <end position="158"/>
    </location>
</feature>
<feature type="helix" evidence="8">
    <location>
        <begin position="180"/>
        <end position="191"/>
    </location>
</feature>
<feature type="turn" evidence="8">
    <location>
        <begin position="192"/>
        <end position="194"/>
    </location>
</feature>
<feature type="strand" evidence="8">
    <location>
        <begin position="198"/>
        <end position="203"/>
    </location>
</feature>
<feature type="helix" evidence="8">
    <location>
        <begin position="211"/>
        <end position="217"/>
    </location>
</feature>
<feature type="strand" evidence="8">
    <location>
        <begin position="222"/>
        <end position="228"/>
    </location>
</feature>
<feature type="strand" evidence="8">
    <location>
        <begin position="231"/>
        <end position="234"/>
    </location>
</feature>
<feature type="helix" evidence="8">
    <location>
        <begin position="244"/>
        <end position="254"/>
    </location>
</feature>
<feature type="turn" evidence="8">
    <location>
        <begin position="255"/>
        <end position="257"/>
    </location>
</feature>
<feature type="strand" evidence="8">
    <location>
        <begin position="259"/>
        <end position="264"/>
    </location>
</feature>
<feature type="strand" evidence="8">
    <location>
        <begin position="269"/>
        <end position="271"/>
    </location>
</feature>
<feature type="helix" evidence="8">
    <location>
        <begin position="274"/>
        <end position="284"/>
    </location>
</feature>
<feature type="strand" evidence="8">
    <location>
        <begin position="292"/>
        <end position="296"/>
    </location>
</feature>
<feature type="turn" evidence="8">
    <location>
        <begin position="297"/>
        <end position="299"/>
    </location>
</feature>
<feature type="turn" evidence="8">
    <location>
        <begin position="310"/>
        <end position="312"/>
    </location>
</feature>
<feature type="helix" evidence="8">
    <location>
        <begin position="317"/>
        <end position="323"/>
    </location>
</feature>
<feature type="helix" evidence="8">
    <location>
        <begin position="327"/>
        <end position="344"/>
    </location>
</feature>
<feature type="turn" evidence="8">
    <location>
        <begin position="348"/>
        <end position="352"/>
    </location>
</feature>
<feature type="strand" evidence="8">
    <location>
        <begin position="354"/>
        <end position="361"/>
    </location>
</feature>
<feature type="turn" evidence="8">
    <location>
        <begin position="363"/>
        <end position="365"/>
    </location>
</feature>
<feature type="helix" evidence="8">
    <location>
        <begin position="366"/>
        <end position="377"/>
    </location>
</feature>
<feature type="strand" evidence="8">
    <location>
        <begin position="381"/>
        <end position="389"/>
    </location>
</feature>
<feature type="helix" evidence="8">
    <location>
        <begin position="391"/>
        <end position="401"/>
    </location>
</feature>
<feature type="turn" evidence="8">
    <location>
        <begin position="402"/>
        <end position="405"/>
    </location>
</feature>
<feature type="strand" evidence="8">
    <location>
        <begin position="409"/>
        <end position="414"/>
    </location>
</feature>
<feature type="turn" evidence="8">
    <location>
        <begin position="416"/>
        <end position="418"/>
    </location>
</feature>
<feature type="strand" evidence="8">
    <location>
        <begin position="425"/>
        <end position="430"/>
    </location>
</feature>
<feature type="helix" evidence="8">
    <location>
        <begin position="442"/>
        <end position="447"/>
    </location>
</feature>
<feature type="strand" evidence="8">
    <location>
        <begin position="453"/>
        <end position="461"/>
    </location>
</feature>
<feature type="strand" evidence="8">
    <location>
        <begin position="463"/>
        <end position="472"/>
    </location>
</feature>
<feature type="helix" evidence="8">
    <location>
        <begin position="474"/>
        <end position="481"/>
    </location>
</feature>
<feature type="strand" evidence="8">
    <location>
        <begin position="486"/>
        <end position="488"/>
    </location>
</feature>
<feature type="helix" evidence="8">
    <location>
        <begin position="492"/>
        <end position="495"/>
    </location>
</feature>
<feature type="helix" evidence="8">
    <location>
        <begin position="502"/>
        <end position="504"/>
    </location>
</feature>
<feature type="strand" evidence="8">
    <location>
        <begin position="505"/>
        <end position="507"/>
    </location>
</feature>
<feature type="strand" evidence="8">
    <location>
        <begin position="512"/>
        <end position="520"/>
    </location>
</feature>
<feature type="strand" evidence="8">
    <location>
        <begin position="530"/>
        <end position="537"/>
    </location>
</feature>
<feature type="strand" evidence="8">
    <location>
        <begin position="542"/>
        <end position="556"/>
    </location>
</feature>
<feature type="strand" evidence="8">
    <location>
        <begin position="559"/>
        <end position="562"/>
    </location>
</feature>
<feature type="strand" evidence="8">
    <location>
        <begin position="578"/>
        <end position="588"/>
    </location>
</feature>
<feature type="strand" evidence="8">
    <location>
        <begin position="593"/>
        <end position="602"/>
    </location>
</feature>
<feature type="strand" evidence="8">
    <location>
        <begin position="604"/>
        <end position="613"/>
    </location>
</feature>
<feature type="strand" evidence="8">
    <location>
        <begin position="615"/>
        <end position="617"/>
    </location>
</feature>
<feature type="helix" evidence="8">
    <location>
        <begin position="624"/>
        <end position="626"/>
    </location>
</feature>